<name>DNAK_STAAE</name>
<dbReference type="EMBL" id="AP009351">
    <property type="protein sequence ID" value="BAF67755.1"/>
    <property type="molecule type" value="Genomic_DNA"/>
</dbReference>
<dbReference type="RefSeq" id="WP_000034716.1">
    <property type="nucleotide sequence ID" value="NZ_JBBIAE010000001.1"/>
</dbReference>
<dbReference type="SMR" id="A6QHC3"/>
<dbReference type="KEGG" id="sae:NWMN_1483"/>
<dbReference type="HOGENOM" id="CLU_005965_2_4_9"/>
<dbReference type="Proteomes" id="UP000006386">
    <property type="component" value="Chromosome"/>
</dbReference>
<dbReference type="GO" id="GO:0005524">
    <property type="term" value="F:ATP binding"/>
    <property type="evidence" value="ECO:0007669"/>
    <property type="project" value="UniProtKB-UniRule"/>
</dbReference>
<dbReference type="GO" id="GO:0140662">
    <property type="term" value="F:ATP-dependent protein folding chaperone"/>
    <property type="evidence" value="ECO:0007669"/>
    <property type="project" value="InterPro"/>
</dbReference>
<dbReference type="GO" id="GO:0051082">
    <property type="term" value="F:unfolded protein binding"/>
    <property type="evidence" value="ECO:0007669"/>
    <property type="project" value="InterPro"/>
</dbReference>
<dbReference type="CDD" id="cd10234">
    <property type="entry name" value="ASKHA_NBD_HSP70_DnaK-like"/>
    <property type="match status" value="1"/>
</dbReference>
<dbReference type="FunFam" id="2.60.34.10:FF:000014">
    <property type="entry name" value="Chaperone protein DnaK HSP70"/>
    <property type="match status" value="1"/>
</dbReference>
<dbReference type="FunFam" id="1.20.1270.10:FF:000001">
    <property type="entry name" value="Molecular chaperone DnaK"/>
    <property type="match status" value="1"/>
</dbReference>
<dbReference type="FunFam" id="3.30.420.40:FF:000071">
    <property type="entry name" value="Molecular chaperone DnaK"/>
    <property type="match status" value="1"/>
</dbReference>
<dbReference type="FunFam" id="3.90.640.10:FF:000003">
    <property type="entry name" value="Molecular chaperone DnaK"/>
    <property type="match status" value="1"/>
</dbReference>
<dbReference type="Gene3D" id="1.20.1270.10">
    <property type="match status" value="1"/>
</dbReference>
<dbReference type="Gene3D" id="3.30.420.40">
    <property type="match status" value="2"/>
</dbReference>
<dbReference type="Gene3D" id="3.90.640.10">
    <property type="entry name" value="Actin, Chain A, domain 4"/>
    <property type="match status" value="1"/>
</dbReference>
<dbReference type="Gene3D" id="2.60.34.10">
    <property type="entry name" value="Substrate Binding Domain Of DNAk, Chain A, domain 1"/>
    <property type="match status" value="1"/>
</dbReference>
<dbReference type="HAMAP" id="MF_00332">
    <property type="entry name" value="DnaK"/>
    <property type="match status" value="1"/>
</dbReference>
<dbReference type="InterPro" id="IPR043129">
    <property type="entry name" value="ATPase_NBD"/>
</dbReference>
<dbReference type="InterPro" id="IPR012725">
    <property type="entry name" value="Chaperone_DnaK"/>
</dbReference>
<dbReference type="InterPro" id="IPR018181">
    <property type="entry name" value="Heat_shock_70_CS"/>
</dbReference>
<dbReference type="InterPro" id="IPR029048">
    <property type="entry name" value="HSP70_C_sf"/>
</dbReference>
<dbReference type="InterPro" id="IPR029047">
    <property type="entry name" value="HSP70_peptide-bd_sf"/>
</dbReference>
<dbReference type="InterPro" id="IPR013126">
    <property type="entry name" value="Hsp_70_fam"/>
</dbReference>
<dbReference type="NCBIfam" id="NF001413">
    <property type="entry name" value="PRK00290.1"/>
    <property type="match status" value="1"/>
</dbReference>
<dbReference type="NCBIfam" id="TIGR02350">
    <property type="entry name" value="prok_dnaK"/>
    <property type="match status" value="1"/>
</dbReference>
<dbReference type="PANTHER" id="PTHR19375">
    <property type="entry name" value="HEAT SHOCK PROTEIN 70KDA"/>
    <property type="match status" value="1"/>
</dbReference>
<dbReference type="Pfam" id="PF00012">
    <property type="entry name" value="HSP70"/>
    <property type="match status" value="1"/>
</dbReference>
<dbReference type="PRINTS" id="PR00301">
    <property type="entry name" value="HEATSHOCK70"/>
</dbReference>
<dbReference type="SUPFAM" id="SSF53067">
    <property type="entry name" value="Actin-like ATPase domain"/>
    <property type="match status" value="2"/>
</dbReference>
<dbReference type="SUPFAM" id="SSF100934">
    <property type="entry name" value="Heat shock protein 70kD (HSP70), C-terminal subdomain"/>
    <property type="match status" value="1"/>
</dbReference>
<dbReference type="SUPFAM" id="SSF100920">
    <property type="entry name" value="Heat shock protein 70kD (HSP70), peptide-binding domain"/>
    <property type="match status" value="1"/>
</dbReference>
<dbReference type="PROSITE" id="PS00297">
    <property type="entry name" value="HSP70_1"/>
    <property type="match status" value="1"/>
</dbReference>
<dbReference type="PROSITE" id="PS00329">
    <property type="entry name" value="HSP70_2"/>
    <property type="match status" value="1"/>
</dbReference>
<dbReference type="PROSITE" id="PS01036">
    <property type="entry name" value="HSP70_3"/>
    <property type="match status" value="1"/>
</dbReference>
<feature type="chain" id="PRO_1000072041" description="Chaperone protein DnaK">
    <location>
        <begin position="1"/>
        <end position="610"/>
    </location>
</feature>
<feature type="region of interest" description="Disordered" evidence="2">
    <location>
        <begin position="525"/>
        <end position="544"/>
    </location>
</feature>
<feature type="region of interest" description="Disordered" evidence="2">
    <location>
        <begin position="576"/>
        <end position="610"/>
    </location>
</feature>
<feature type="compositionally biased region" description="Basic and acidic residues" evidence="2">
    <location>
        <begin position="529"/>
        <end position="542"/>
    </location>
</feature>
<feature type="compositionally biased region" description="Low complexity" evidence="2">
    <location>
        <begin position="576"/>
        <end position="592"/>
    </location>
</feature>
<feature type="compositionally biased region" description="Basic and acidic residues" evidence="2">
    <location>
        <begin position="599"/>
        <end position="610"/>
    </location>
</feature>
<feature type="modified residue" description="Phosphothreonine; by autocatalysis" evidence="1">
    <location>
        <position position="173"/>
    </location>
</feature>
<evidence type="ECO:0000255" key="1">
    <source>
        <dbReference type="HAMAP-Rule" id="MF_00332"/>
    </source>
</evidence>
<evidence type="ECO:0000256" key="2">
    <source>
        <dbReference type="SAM" id="MobiDB-lite"/>
    </source>
</evidence>
<proteinExistence type="inferred from homology"/>
<organism>
    <name type="scientific">Staphylococcus aureus (strain Newman)</name>
    <dbReference type="NCBI Taxonomy" id="426430"/>
    <lineage>
        <taxon>Bacteria</taxon>
        <taxon>Bacillati</taxon>
        <taxon>Bacillota</taxon>
        <taxon>Bacilli</taxon>
        <taxon>Bacillales</taxon>
        <taxon>Staphylococcaceae</taxon>
        <taxon>Staphylococcus</taxon>
    </lineage>
</organism>
<comment type="function">
    <text evidence="1">Acts as a chaperone.</text>
</comment>
<comment type="induction">
    <text evidence="1">By stress conditions e.g. heat shock.</text>
</comment>
<comment type="similarity">
    <text evidence="1">Belongs to the heat shock protein 70 family.</text>
</comment>
<sequence length="610" mass="66361">MSKIIGIDLGTTNSCVTVLEGDEPKVIQNPEGSRTTPSVVAFKNGETQVGEVAKRQAITNPNTVQSIKRHMGTDYKVDIEGKSYTPQEISAMILQNLKNTAESYLGEKVDKAVITVPAYFNDAERQATKDAGKIAGLEVERIINEPTAAALAYGLDKTDKDEKVLVFDLGGGTFDVSILELGDGVFEVLSTAGDNKLGGDDFDQVIIDYLVAEFKKENGVDLSQDKMALQRLKDAAEKAKKDLSGVSQTQISLPFISAGENGPLHLEVNLTRSKFEELSDSLIRRTMEPTRQAMKDAGLTNSDIDEVILVGGSTRIPAVQEAVKKEIGKEPNKGVNPDEVVAMGAAIQGGVITGDVKDVVLLDVTPLSLGIEILGGRMNTLIERNTTIPTSKSQIYSTAVDNQPSVDVHVLQGERPMAADNKTLGRFQLTDIPPAERGKPQIEVTFDIDKNGIVNVTAKDLGTNKEQRITIQSSSSLSDEEIDRMVKDAEVNAEADKKRREEVDLRNEADSLVFQVEKTLTDLGENIGEEDKKSAEEKKDALKTALEGQDIEDIKSKKEELEKVIQELSAKVYEQAAQQQQQAQGANAGQNNDSTVEDAEFKEVKDDDKK</sequence>
<keyword id="KW-0067">ATP-binding</keyword>
<keyword id="KW-0143">Chaperone</keyword>
<keyword id="KW-0547">Nucleotide-binding</keyword>
<keyword id="KW-0597">Phosphoprotein</keyword>
<keyword id="KW-0346">Stress response</keyword>
<protein>
    <recommendedName>
        <fullName evidence="1">Chaperone protein DnaK</fullName>
    </recommendedName>
    <alternativeName>
        <fullName evidence="1">HSP70</fullName>
    </alternativeName>
    <alternativeName>
        <fullName evidence="1">Heat shock 70 kDa protein</fullName>
    </alternativeName>
    <alternativeName>
        <fullName evidence="1">Heat shock protein 70</fullName>
    </alternativeName>
</protein>
<gene>
    <name evidence="1" type="primary">dnaK</name>
    <name type="ordered locus">NWMN_1483</name>
</gene>
<reference key="1">
    <citation type="journal article" date="2008" name="J. Bacteriol.">
        <title>Genome sequence of Staphylococcus aureus strain Newman and comparative analysis of staphylococcal genomes: polymorphism and evolution of two major pathogenicity islands.</title>
        <authorList>
            <person name="Baba T."/>
            <person name="Bae T."/>
            <person name="Schneewind O."/>
            <person name="Takeuchi F."/>
            <person name="Hiramatsu K."/>
        </authorList>
    </citation>
    <scope>NUCLEOTIDE SEQUENCE [LARGE SCALE GENOMIC DNA]</scope>
    <source>
        <strain>Newman</strain>
    </source>
</reference>
<accession>A6QHC3</accession>